<accession>O08890</accession>
<organism>
    <name type="scientific">Cavia porcellus</name>
    <name type="common">Guinea pig</name>
    <dbReference type="NCBI Taxonomy" id="10141"/>
    <lineage>
        <taxon>Eukaryota</taxon>
        <taxon>Metazoa</taxon>
        <taxon>Chordata</taxon>
        <taxon>Craniata</taxon>
        <taxon>Vertebrata</taxon>
        <taxon>Euteleostomi</taxon>
        <taxon>Mammalia</taxon>
        <taxon>Eutheria</taxon>
        <taxon>Euarchontoglires</taxon>
        <taxon>Glires</taxon>
        <taxon>Rodentia</taxon>
        <taxon>Hystricomorpha</taxon>
        <taxon>Caviidae</taxon>
        <taxon>Cavia</taxon>
    </lineage>
</organism>
<feature type="chain" id="PRO_0000068936" description="5-hydroxytryptamine receptor 1F">
    <location>
        <begin position="1"/>
        <end position="366"/>
    </location>
</feature>
<feature type="topological domain" description="Extracellular" evidence="2">
    <location>
        <begin position="1"/>
        <end position="24"/>
    </location>
</feature>
<feature type="transmembrane region" description="Helical; Name=1" evidence="2">
    <location>
        <begin position="25"/>
        <end position="49"/>
    </location>
</feature>
<feature type="topological domain" description="Cytoplasmic" evidence="2">
    <location>
        <begin position="50"/>
        <end position="59"/>
    </location>
</feature>
<feature type="transmembrane region" description="Helical; Name=2" evidence="2">
    <location>
        <begin position="60"/>
        <end position="81"/>
    </location>
</feature>
<feature type="topological domain" description="Extracellular" evidence="2">
    <location>
        <begin position="82"/>
        <end position="96"/>
    </location>
</feature>
<feature type="transmembrane region" description="Helical; Name=3" evidence="2">
    <location>
        <begin position="97"/>
        <end position="119"/>
    </location>
</feature>
<feature type="topological domain" description="Cytoplasmic" evidence="2">
    <location>
        <begin position="120"/>
        <end position="139"/>
    </location>
</feature>
<feature type="transmembrane region" description="Helical; Name=4" evidence="2">
    <location>
        <begin position="140"/>
        <end position="159"/>
    </location>
</feature>
<feature type="topological domain" description="Extracellular" evidence="2">
    <location>
        <begin position="160"/>
        <end position="178"/>
    </location>
</feature>
<feature type="transmembrane region" description="Helical; Name=5" evidence="2">
    <location>
        <begin position="179"/>
        <end position="202"/>
    </location>
</feature>
<feature type="topological domain" description="Cytoplasmic" evidence="2">
    <location>
        <begin position="203"/>
        <end position="291"/>
    </location>
</feature>
<feature type="transmembrane region" description="Helical; Name=6" evidence="2">
    <location>
        <begin position="292"/>
        <end position="315"/>
    </location>
</feature>
<feature type="topological domain" description="Extracellular" evidence="2">
    <location>
        <begin position="316"/>
        <end position="327"/>
    </location>
</feature>
<feature type="transmembrane region" description="Helical; Name=7" evidence="2">
    <location>
        <begin position="328"/>
        <end position="350"/>
    </location>
</feature>
<feature type="topological domain" description="Cytoplasmic" evidence="2">
    <location>
        <begin position="351"/>
        <end position="366"/>
    </location>
</feature>
<feature type="short sequence motif" description="DRY motif; important for ligand-induced conformation changes" evidence="3">
    <location>
        <begin position="120"/>
        <end position="122"/>
    </location>
</feature>
<feature type="short sequence motif" description="NPxxY motif; important for ligand-induced conformation changes and signaling" evidence="3">
    <location>
        <begin position="343"/>
        <end position="347"/>
    </location>
</feature>
<feature type="binding site" evidence="1">
    <location>
        <position position="103"/>
    </location>
    <ligand>
        <name>serotonin</name>
        <dbReference type="ChEBI" id="CHEBI:350546"/>
    </ligand>
</feature>
<feature type="binding site" evidence="1">
    <location>
        <position position="107"/>
    </location>
    <ligand>
        <name>serotonin</name>
        <dbReference type="ChEBI" id="CHEBI:350546"/>
    </ligand>
</feature>
<feature type="glycosylation site" description="N-linked (GlcNAc...) asparagine" evidence="4">
    <location>
        <position position="5"/>
    </location>
</feature>
<feature type="glycosylation site" description="N-linked (GlcNAc...) asparagine" evidence="4">
    <location>
        <position position="10"/>
    </location>
</feature>
<feature type="disulfide bond" evidence="5">
    <location>
        <begin position="96"/>
        <end position="172"/>
    </location>
</feature>
<name>5HT1F_CAVPO</name>
<reference key="1">
    <citation type="journal article" date="1997" name="Neuropharmacology">
        <title>Cloning and characterization of the guinea pig 5-HT1F receptor subtype: a comparison of the pharmacological profile to the human species homolog.</title>
        <authorList>
            <person name="Adham N."/>
            <person name="Bard J.A."/>
            <person name="Zgombick J.M."/>
            <person name="Durkin M.M."/>
            <person name="Kucharewicz S."/>
            <person name="Weinshank R.L."/>
            <person name="Branchek T.A."/>
        </authorList>
    </citation>
    <scope>NUCLEOTIDE SEQUENCE [GENOMIC DNA]</scope>
    <scope>FUNCTION</scope>
    <scope>SUBCELLULAR LOCATION</scope>
    <source>
        <tissue>Liver</tissue>
    </source>
</reference>
<dbReference type="EMBL" id="U80852">
    <property type="protein sequence ID" value="AAB58496.1"/>
    <property type="molecule type" value="Genomic_DNA"/>
</dbReference>
<dbReference type="RefSeq" id="XP_005008750.1">
    <property type="nucleotide sequence ID" value="XM_005008693.2"/>
</dbReference>
<dbReference type="SMR" id="O08890"/>
<dbReference type="FunCoup" id="O08890">
    <property type="interactions" value="850"/>
</dbReference>
<dbReference type="GlyCosmos" id="O08890">
    <property type="glycosylation" value="2 sites, No reported glycans"/>
</dbReference>
<dbReference type="GeneID" id="100716637"/>
<dbReference type="KEGG" id="cpoc:100716637"/>
<dbReference type="CTD" id="3355"/>
<dbReference type="InParanoid" id="O08890"/>
<dbReference type="OrthoDB" id="5956310at2759"/>
<dbReference type="Proteomes" id="UP000005447">
    <property type="component" value="Unassembled WGS sequence"/>
</dbReference>
<dbReference type="GO" id="GO:0005886">
    <property type="term" value="C:plasma membrane"/>
    <property type="evidence" value="ECO:0000250"/>
    <property type="project" value="UniProtKB"/>
</dbReference>
<dbReference type="GO" id="GO:0004993">
    <property type="term" value="F:G protein-coupled serotonin receptor activity"/>
    <property type="evidence" value="ECO:0000250"/>
    <property type="project" value="UniProtKB"/>
</dbReference>
<dbReference type="GO" id="GO:0071880">
    <property type="term" value="P:adenylate cyclase-activating adrenergic receptor signaling pathway"/>
    <property type="evidence" value="ECO:0007669"/>
    <property type="project" value="TreeGrafter"/>
</dbReference>
<dbReference type="GO" id="GO:0007193">
    <property type="term" value="P:adenylate cyclase-inhibiting G protein-coupled receptor signaling pathway"/>
    <property type="evidence" value="ECO:0000250"/>
    <property type="project" value="UniProtKB"/>
</dbReference>
<dbReference type="GO" id="GO:0043410">
    <property type="term" value="P:positive regulation of MAPK cascade"/>
    <property type="evidence" value="ECO:0007669"/>
    <property type="project" value="TreeGrafter"/>
</dbReference>
<dbReference type="CDD" id="cd15334">
    <property type="entry name" value="7tmA_5-HT1F"/>
    <property type="match status" value="1"/>
</dbReference>
<dbReference type="FunFam" id="1.20.1070.10:FF:000085">
    <property type="entry name" value="5-hydroxytryptamine receptor 1F"/>
    <property type="match status" value="1"/>
</dbReference>
<dbReference type="Gene3D" id="1.20.1070.10">
    <property type="entry name" value="Rhodopsin 7-helix transmembrane proteins"/>
    <property type="match status" value="1"/>
</dbReference>
<dbReference type="InterPro" id="IPR000450">
    <property type="entry name" value="5HT1F_rcpt"/>
</dbReference>
<dbReference type="InterPro" id="IPR002231">
    <property type="entry name" value="5HT_rcpt"/>
</dbReference>
<dbReference type="InterPro" id="IPR000276">
    <property type="entry name" value="GPCR_Rhodpsn"/>
</dbReference>
<dbReference type="InterPro" id="IPR017452">
    <property type="entry name" value="GPCR_Rhodpsn_7TM"/>
</dbReference>
<dbReference type="PANTHER" id="PTHR24248:SF196">
    <property type="entry name" value="5-HYDROXYTRYPTAMINE RECEPTOR 1D"/>
    <property type="match status" value="1"/>
</dbReference>
<dbReference type="PANTHER" id="PTHR24248">
    <property type="entry name" value="ADRENERGIC RECEPTOR-RELATED G-PROTEIN COUPLED RECEPTOR"/>
    <property type="match status" value="1"/>
</dbReference>
<dbReference type="Pfam" id="PF00001">
    <property type="entry name" value="7tm_1"/>
    <property type="match status" value="1"/>
</dbReference>
<dbReference type="PRINTS" id="PR00515">
    <property type="entry name" value="5HT1FRECEPTR"/>
</dbReference>
<dbReference type="PRINTS" id="PR01101">
    <property type="entry name" value="5HTRECEPTOR"/>
</dbReference>
<dbReference type="PRINTS" id="PR00237">
    <property type="entry name" value="GPCRRHODOPSN"/>
</dbReference>
<dbReference type="SMART" id="SM01381">
    <property type="entry name" value="7TM_GPCR_Srsx"/>
    <property type="match status" value="1"/>
</dbReference>
<dbReference type="SUPFAM" id="SSF81321">
    <property type="entry name" value="Family A G protein-coupled receptor-like"/>
    <property type="match status" value="1"/>
</dbReference>
<dbReference type="PROSITE" id="PS00237">
    <property type="entry name" value="G_PROTEIN_RECEP_F1_1"/>
    <property type="match status" value="1"/>
</dbReference>
<dbReference type="PROSITE" id="PS50262">
    <property type="entry name" value="G_PROTEIN_RECEP_F1_2"/>
    <property type="match status" value="1"/>
</dbReference>
<keyword id="KW-1003">Cell membrane</keyword>
<keyword id="KW-1015">Disulfide bond</keyword>
<keyword id="KW-0297">G-protein coupled receptor</keyword>
<keyword id="KW-0325">Glycoprotein</keyword>
<keyword id="KW-0472">Membrane</keyword>
<keyword id="KW-0675">Receptor</keyword>
<keyword id="KW-1185">Reference proteome</keyword>
<keyword id="KW-0807">Transducer</keyword>
<keyword id="KW-0812">Transmembrane</keyword>
<keyword id="KW-1133">Transmembrane helix</keyword>
<comment type="function">
    <text evidence="2 6">G-protein coupled receptor for 5-hydroxytryptamine (serotonin) (PubMed:9225282). Also functions as a receptor for various alkaloids and psychoactive substances (By similarity). Ligand binding causes a conformation change that triggers signaling via guanine nucleotide-binding proteins (G proteins) and modulates the activity of downstream effectors, such as adenylate cyclase (By similarity). HTR1F is coupled to G(i)/G(o) G alpha proteins and mediates inhibitory neurotransmission by inhibiting adenylate cyclase activity (By similarity).</text>
</comment>
<comment type="subcellular location">
    <subcellularLocation>
        <location evidence="6">Cell membrane</location>
        <topology evidence="2">Multi-pass membrane protein</topology>
    </subcellularLocation>
</comment>
<comment type="similarity">
    <text evidence="5">Belongs to the G-protein coupled receptor 1 family.</text>
</comment>
<proteinExistence type="inferred from homology"/>
<sequence>MDFLNSSDQNLTSEELLHRMPSKILVSLTLSGLALMTTTINSLVIAAIIVTRKLHHPANYLICSLAVTDFLVAVLVMPFSIVYIVRESWIMGQVLCDIWLSVDIICCTCSILHLSAIALDRYRAITDAVEYARKRTPKQAGIMITIVWIISVFISMPPLFWRHQGTSRDDECIIKHDHIVSTIYSTFGAFYIPLVLILILYYKIYKAAKTLYHKRQASRIAKEELNGQVLLESGEKSIKMVSTTYVPEKSLSDPSTDFDKIHNTVKSPRCKLRHEKSWRRQKISGTRERKAATTLGLILGAFVICWLPFFVKELVVNVCEKCKISEEMANFLAWLGYLNSLINPLIYTIFNEDFKKAFQKLVRCQY</sequence>
<protein>
    <recommendedName>
        <fullName>5-hydroxytryptamine receptor 1F</fullName>
        <shortName>5-HT-1F</shortName>
        <shortName>5-HT1F</shortName>
    </recommendedName>
    <alternativeName>
        <fullName>Serotonin receptor 1F</fullName>
    </alternativeName>
</protein>
<gene>
    <name type="primary">HTR1F</name>
</gene>
<evidence type="ECO:0000250" key="1">
    <source>
        <dbReference type="UniProtKB" id="P28221"/>
    </source>
</evidence>
<evidence type="ECO:0000250" key="2">
    <source>
        <dbReference type="UniProtKB" id="P30939"/>
    </source>
</evidence>
<evidence type="ECO:0000250" key="3">
    <source>
        <dbReference type="UniProtKB" id="P41595"/>
    </source>
</evidence>
<evidence type="ECO:0000255" key="4"/>
<evidence type="ECO:0000255" key="5">
    <source>
        <dbReference type="PROSITE-ProRule" id="PRU00521"/>
    </source>
</evidence>
<evidence type="ECO:0000269" key="6">
    <source>
    </source>
</evidence>